<evidence type="ECO:0000250" key="1">
    <source>
        <dbReference type="UniProtKB" id="O34349"/>
    </source>
</evidence>
<evidence type="ECO:0000250" key="2">
    <source>
        <dbReference type="UniProtKB" id="O43688"/>
    </source>
</evidence>
<evidence type="ECO:0000250" key="3">
    <source>
        <dbReference type="UniProtKB" id="Q8K593"/>
    </source>
</evidence>
<evidence type="ECO:0000255" key="4"/>
<evidence type="ECO:0000305" key="5"/>
<proteinExistence type="evidence at transcript level"/>
<name>PLPP2_BOVIN</name>
<organism>
    <name type="scientific">Bos taurus</name>
    <name type="common">Bovine</name>
    <dbReference type="NCBI Taxonomy" id="9913"/>
    <lineage>
        <taxon>Eukaryota</taxon>
        <taxon>Metazoa</taxon>
        <taxon>Chordata</taxon>
        <taxon>Craniata</taxon>
        <taxon>Vertebrata</taxon>
        <taxon>Euteleostomi</taxon>
        <taxon>Mammalia</taxon>
        <taxon>Eutheria</taxon>
        <taxon>Laurasiatheria</taxon>
        <taxon>Artiodactyla</taxon>
        <taxon>Ruminantia</taxon>
        <taxon>Pecora</taxon>
        <taxon>Bovidae</taxon>
        <taxon>Bovinae</taxon>
        <taxon>Bos</taxon>
    </lineage>
</organism>
<accession>Q2HJ61</accession>
<gene>
    <name evidence="2" type="primary">PLPP2</name>
    <name type="synonym">PPAP2C</name>
</gene>
<reference key="1">
    <citation type="submission" date="2006-02" db="EMBL/GenBank/DDBJ databases">
        <authorList>
            <consortium name="NIH - Mammalian Gene Collection (MGC) project"/>
        </authorList>
    </citation>
    <scope>NUCLEOTIDE SEQUENCE [LARGE SCALE MRNA]</scope>
    <source>
        <strain>Hereford</strain>
        <tissue>Uterus</tissue>
    </source>
</reference>
<comment type="function">
    <text evidence="2 3">Magnesium-independent phospholipid phosphatase that catalyzes the dephosphorylation of a variety of glycerolipid and sphingolipid phosphate esters including phosphatidate/PA, lysophosphatidate/LPA, sphingosine 1-phosphate/S1P and ceramide 1-phosphate/C1P. Has no apparent extracellular phosphatase activity and therefore most probably acts intracellularly. Also acts on N-oleoyl ethanolamine phosphate/N-(9Z-octadecenoyl)-ethanolamine phosphate, a potential physiological compound. Through dephosphorylation of these bioactive lipid mediators produces new bioactive compounds and may regulate signal transduction in different cellular processes (By similarity). Indirectly regulates, for instance, cell cycle G1/S phase transition through its phospholipid phosphatase activity (By similarity).</text>
</comment>
<comment type="catalytic activity">
    <reaction evidence="2">
        <text>a 1,2-diacyl-sn-glycero-3-phosphate + H2O = a 1,2-diacyl-sn-glycerol + phosphate</text>
        <dbReference type="Rhea" id="RHEA:27429"/>
        <dbReference type="ChEBI" id="CHEBI:15377"/>
        <dbReference type="ChEBI" id="CHEBI:17815"/>
        <dbReference type="ChEBI" id="CHEBI:43474"/>
        <dbReference type="ChEBI" id="CHEBI:58608"/>
        <dbReference type="EC" id="3.1.3.4"/>
    </reaction>
    <physiologicalReaction direction="left-to-right" evidence="2">
        <dbReference type="Rhea" id="RHEA:27430"/>
    </physiologicalReaction>
</comment>
<comment type="catalytic activity">
    <reaction evidence="2">
        <text>1,2-dihexadecanoyl-sn-glycero-3-phosphate + H2O = 1,2-dihexadecanoyl-sn-glycerol + phosphate</text>
        <dbReference type="Rhea" id="RHEA:43236"/>
        <dbReference type="ChEBI" id="CHEBI:15377"/>
        <dbReference type="ChEBI" id="CHEBI:43474"/>
        <dbReference type="ChEBI" id="CHEBI:72859"/>
        <dbReference type="ChEBI" id="CHEBI:82929"/>
    </reaction>
    <physiologicalReaction direction="left-to-right" evidence="2">
        <dbReference type="Rhea" id="RHEA:43237"/>
    </physiologicalReaction>
</comment>
<comment type="catalytic activity">
    <reaction evidence="2">
        <text>1,2-di-(9Z-octadecenoyl)-sn-glycero-3-phosphate + H2O = 1,2-di-(9Z-octadecenoyl)-sn-glycerol + phosphate</text>
        <dbReference type="Rhea" id="RHEA:43244"/>
        <dbReference type="ChEBI" id="CHEBI:15377"/>
        <dbReference type="ChEBI" id="CHEBI:43474"/>
        <dbReference type="ChEBI" id="CHEBI:52333"/>
        <dbReference type="ChEBI" id="CHEBI:74546"/>
    </reaction>
    <physiologicalReaction direction="left-to-right" evidence="2">
        <dbReference type="Rhea" id="RHEA:43245"/>
    </physiologicalReaction>
</comment>
<comment type="catalytic activity">
    <reaction evidence="2">
        <text>a monoacyl-sn-glycero-3-phosphate + H2O = a monoacylglycerol + phosphate</text>
        <dbReference type="Rhea" id="RHEA:46736"/>
        <dbReference type="ChEBI" id="CHEBI:15377"/>
        <dbReference type="ChEBI" id="CHEBI:17408"/>
        <dbReference type="ChEBI" id="CHEBI:43474"/>
        <dbReference type="ChEBI" id="CHEBI:77589"/>
    </reaction>
    <physiologicalReaction direction="left-to-right" evidence="2">
        <dbReference type="Rhea" id="RHEA:46737"/>
    </physiologicalReaction>
</comment>
<comment type="catalytic activity">
    <reaction evidence="2">
        <text>(9Z)-octadecenoyl-sn-glycero-3-phosphate + H2O = (9Z-octadecenoyl)-glycerol + phosphate</text>
        <dbReference type="Rhea" id="RHEA:50884"/>
        <dbReference type="ChEBI" id="CHEBI:15377"/>
        <dbReference type="ChEBI" id="CHEBI:43474"/>
        <dbReference type="ChEBI" id="CHEBI:75937"/>
        <dbReference type="ChEBI" id="CHEBI:84973"/>
    </reaction>
    <physiologicalReaction direction="left-to-right" evidence="2">
        <dbReference type="Rhea" id="RHEA:50885"/>
    </physiologicalReaction>
</comment>
<comment type="catalytic activity">
    <reaction evidence="2">
        <text>sphing-4-enine 1-phosphate + H2O = sphing-4-enine + phosphate</text>
        <dbReference type="Rhea" id="RHEA:27518"/>
        <dbReference type="ChEBI" id="CHEBI:15377"/>
        <dbReference type="ChEBI" id="CHEBI:43474"/>
        <dbReference type="ChEBI" id="CHEBI:57756"/>
        <dbReference type="ChEBI" id="CHEBI:60119"/>
    </reaction>
    <physiologicalReaction direction="left-to-right" evidence="2">
        <dbReference type="Rhea" id="RHEA:27519"/>
    </physiologicalReaction>
</comment>
<comment type="catalytic activity">
    <reaction evidence="2">
        <text>an N-acylsphing-4-enine 1-phosphate + H2O = an N-acylsphing-4-enine + phosphate</text>
        <dbReference type="Rhea" id="RHEA:33743"/>
        <dbReference type="ChEBI" id="CHEBI:15377"/>
        <dbReference type="ChEBI" id="CHEBI:43474"/>
        <dbReference type="ChEBI" id="CHEBI:52639"/>
        <dbReference type="ChEBI" id="CHEBI:57674"/>
    </reaction>
    <physiologicalReaction direction="left-to-right" evidence="2">
        <dbReference type="Rhea" id="RHEA:33744"/>
    </physiologicalReaction>
</comment>
<comment type="catalytic activity">
    <reaction evidence="2">
        <text>N-(octanoyl)-sphing-4-enine-1-phosphate + H2O = N-octanoylsphing-4-enine + phosphate</text>
        <dbReference type="Rhea" id="RHEA:62040"/>
        <dbReference type="ChEBI" id="CHEBI:15377"/>
        <dbReference type="ChEBI" id="CHEBI:43474"/>
        <dbReference type="ChEBI" id="CHEBI:45815"/>
        <dbReference type="ChEBI" id="CHEBI:85376"/>
    </reaction>
    <physiologicalReaction direction="left-to-right" evidence="2">
        <dbReference type="Rhea" id="RHEA:62041"/>
    </physiologicalReaction>
</comment>
<comment type="catalytic activity">
    <reaction evidence="2">
        <text>N-(9Z-octadecenoyl)-ethanolamine phosphate + H2O = N-(9Z-octadecenoyl) ethanolamine + phosphate</text>
        <dbReference type="Rhea" id="RHEA:62160"/>
        <dbReference type="ChEBI" id="CHEBI:15377"/>
        <dbReference type="ChEBI" id="CHEBI:43474"/>
        <dbReference type="ChEBI" id="CHEBI:71466"/>
        <dbReference type="ChEBI" id="CHEBI:145465"/>
    </reaction>
    <physiologicalReaction direction="left-to-right" evidence="2">
        <dbReference type="Rhea" id="RHEA:62161"/>
    </physiologicalReaction>
</comment>
<comment type="activity regulation">
    <text evidence="2">Magnesium-independent phospholipid phosphatase. Insensitive to N-ethylmaleimide.</text>
</comment>
<comment type="pathway">
    <text evidence="2">Lipid metabolism; phospholipid metabolism.</text>
</comment>
<comment type="subunit">
    <text evidence="2">Forms functional homodimers and homooligomers. Can also form heterooligomers with PLPP1 and PLPP3.</text>
</comment>
<comment type="subcellular location">
    <subcellularLocation>
        <location evidence="2">Membrane</location>
        <topology evidence="4">Multi-pass membrane protein</topology>
    </subcellularLocation>
    <subcellularLocation>
        <location evidence="2">Cell membrane</location>
        <topology evidence="4">Multi-pass membrane protein</topology>
    </subcellularLocation>
    <subcellularLocation>
        <location evidence="2">Early endosome membrane</location>
        <topology evidence="4">Multi-pass membrane protein</topology>
    </subcellularLocation>
    <subcellularLocation>
        <location evidence="2">Endoplasmic reticulum membrane</location>
        <topology evidence="4">Multi-pass membrane protein</topology>
    </subcellularLocation>
</comment>
<comment type="PTM">
    <text evidence="2">N-glycosylated.</text>
</comment>
<comment type="similarity">
    <text evidence="5">Belongs to the PA-phosphatase related phosphoesterase family.</text>
</comment>
<protein>
    <recommendedName>
        <fullName evidence="5">Phospholipid phosphatase 2</fullName>
        <ecNumber evidence="2">3.1.3.-</ecNumber>
        <ecNumber evidence="2">3.1.3.4</ecNumber>
    </recommendedName>
    <alternativeName>
        <fullName>Lipid phosphate phosphohydrolase 2</fullName>
    </alternativeName>
    <alternativeName>
        <fullName>PAP2-gamma</fullName>
        <shortName>PAP2-G</shortName>
    </alternativeName>
    <alternativeName>
        <fullName>Phosphatidate phosphohydrolase type 2c</fullName>
    </alternativeName>
    <alternativeName>
        <fullName>Phosphatidic acid phosphatase 2c</fullName>
        <shortName>PAP-2c</shortName>
        <shortName>PAP2c</shortName>
    </alternativeName>
</protein>
<feature type="chain" id="PRO_0000286941" description="Phospholipid phosphatase 2">
    <location>
        <begin position="1"/>
        <end position="287"/>
    </location>
</feature>
<feature type="topological domain" description="Cytoplasmic" evidence="5">
    <location>
        <begin position="1"/>
        <end position="4"/>
    </location>
</feature>
<feature type="transmembrane region" description="Helical" evidence="4">
    <location>
        <begin position="5"/>
        <end position="25"/>
    </location>
</feature>
<feature type="topological domain" description="Lumenal" evidence="5">
    <location>
        <begin position="26"/>
        <end position="51"/>
    </location>
</feature>
<feature type="transmembrane region" description="Helical" evidence="4">
    <location>
        <begin position="52"/>
        <end position="72"/>
    </location>
</feature>
<feature type="topological domain" description="Cytoplasmic" evidence="5">
    <location>
        <begin position="73"/>
        <end position="87"/>
    </location>
</feature>
<feature type="transmembrane region" description="Helical" evidence="4">
    <location>
        <begin position="88"/>
        <end position="108"/>
    </location>
</feature>
<feature type="topological domain" description="Lumenal" evidence="5">
    <location>
        <begin position="109"/>
        <end position="161"/>
    </location>
</feature>
<feature type="transmembrane region" description="Helical" evidence="4">
    <location>
        <begin position="162"/>
        <end position="182"/>
    </location>
</feature>
<feature type="topological domain" description="Cytoplasmic" evidence="5">
    <location>
        <begin position="183"/>
        <end position="193"/>
    </location>
</feature>
<feature type="transmembrane region" description="Helical" evidence="4">
    <location>
        <begin position="194"/>
        <end position="211"/>
    </location>
</feature>
<feature type="topological domain" description="Lumenal" evidence="5">
    <location>
        <begin position="212"/>
        <end position="218"/>
    </location>
</feature>
<feature type="transmembrane region" description="Helical" evidence="4">
    <location>
        <begin position="219"/>
        <end position="239"/>
    </location>
</feature>
<feature type="topological domain" description="Cytoplasmic" evidence="5">
    <location>
        <begin position="240"/>
        <end position="287"/>
    </location>
</feature>
<feature type="region of interest" description="Phosphatase sequence motif I" evidence="1">
    <location>
        <begin position="117"/>
        <end position="125"/>
    </location>
</feature>
<feature type="region of interest" description="Phosphatase sequence motif II" evidence="1">
    <location>
        <begin position="164"/>
        <end position="167"/>
    </location>
</feature>
<feature type="region of interest" description="Phosphatase sequence motif III" evidence="1">
    <location>
        <begin position="212"/>
        <end position="223"/>
    </location>
</feature>
<feature type="active site" description="Proton donors" evidence="1">
    <location>
        <position position="167"/>
    </location>
</feature>
<feature type="active site" description="Nucleophile" evidence="1">
    <location>
        <position position="219"/>
    </location>
</feature>
<feature type="site" description="Stabilizes the active site histidine for nucleophilic attack" evidence="1">
    <location>
        <position position="223"/>
    </location>
</feature>
<feature type="glycosylation site" description="N-linked (GlcNAc...) asparagine" evidence="4">
    <location>
        <position position="139"/>
    </location>
</feature>
<feature type="glycosylation site" description="N-linked (GlcNAc...) asparagine" evidence="4">
    <location>
        <position position="155"/>
    </location>
</feature>
<sequence length="287" mass="32328">MERRWVFVLLDVLCVLVAALPCAILTFVNTPYKRGFYCGDDSIRYPYRPDTITHGLMAGVIITATVILVSAGEAYLVYTDRLYSRSDFNNYLAALYKVVGTFLFGAAVSQSLTDLAKYMTGRLRPNFLAVCDPDWSRVNCSAYVQVEVCRGSSANVTESRLSFYSGHSSFGMYCMVFLALYVQARLCWKWARLLRPTVQFFLVAFALYVGYTRVSDHKHHWSDVLVGLLQGALVASLTVRYISDFFKARPPQHCPEEEDLERKPSLSLTLALGETDCNHYGYPVSSS</sequence>
<dbReference type="EC" id="3.1.3.-" evidence="2"/>
<dbReference type="EC" id="3.1.3.4" evidence="2"/>
<dbReference type="EMBL" id="BC113292">
    <property type="protein sequence ID" value="AAI13293.1"/>
    <property type="molecule type" value="mRNA"/>
</dbReference>
<dbReference type="RefSeq" id="NP_001039355.1">
    <property type="nucleotide sequence ID" value="NM_001045890.1"/>
</dbReference>
<dbReference type="FunCoup" id="Q2HJ61">
    <property type="interactions" value="374"/>
</dbReference>
<dbReference type="STRING" id="9913.ENSBTAP00000060289"/>
<dbReference type="GlyCosmos" id="Q2HJ61">
    <property type="glycosylation" value="2 sites, No reported glycans"/>
</dbReference>
<dbReference type="GlyGen" id="Q2HJ61">
    <property type="glycosylation" value="2 sites"/>
</dbReference>
<dbReference type="PaxDb" id="9913-ENSBTAP00000000955"/>
<dbReference type="GeneID" id="504545"/>
<dbReference type="KEGG" id="bta:504545"/>
<dbReference type="CTD" id="8612"/>
<dbReference type="VEuPathDB" id="HostDB:ENSBTAG00000000717"/>
<dbReference type="eggNOG" id="KOG3030">
    <property type="taxonomic scope" value="Eukaryota"/>
</dbReference>
<dbReference type="HOGENOM" id="CLU_021458_3_1_1"/>
<dbReference type="InParanoid" id="Q2HJ61"/>
<dbReference type="OMA" id="CWRWARL"/>
<dbReference type="OrthoDB" id="8907274at2759"/>
<dbReference type="TreeFam" id="TF316040"/>
<dbReference type="Reactome" id="R-BTA-9845614">
    <property type="pathway name" value="Sphingolipid catabolism"/>
</dbReference>
<dbReference type="UniPathway" id="UPA00085"/>
<dbReference type="Proteomes" id="UP000009136">
    <property type="component" value="Chromosome 7"/>
</dbReference>
<dbReference type="Bgee" id="ENSBTAG00000000717">
    <property type="expression patterns" value="Expressed in retina and 103 other cell types or tissues"/>
</dbReference>
<dbReference type="GO" id="GO:0005901">
    <property type="term" value="C:caveola"/>
    <property type="evidence" value="ECO:0000250"/>
    <property type="project" value="UniProtKB"/>
</dbReference>
<dbReference type="GO" id="GO:0005769">
    <property type="term" value="C:early endosome"/>
    <property type="evidence" value="ECO:0000250"/>
    <property type="project" value="UniProtKB"/>
</dbReference>
<dbReference type="GO" id="GO:0031901">
    <property type="term" value="C:early endosome membrane"/>
    <property type="evidence" value="ECO:0007669"/>
    <property type="project" value="UniProtKB-SubCell"/>
</dbReference>
<dbReference type="GO" id="GO:0005783">
    <property type="term" value="C:endoplasmic reticulum"/>
    <property type="evidence" value="ECO:0000250"/>
    <property type="project" value="UniProtKB"/>
</dbReference>
<dbReference type="GO" id="GO:0005789">
    <property type="term" value="C:endoplasmic reticulum membrane"/>
    <property type="evidence" value="ECO:0007669"/>
    <property type="project" value="UniProtKB-SubCell"/>
</dbReference>
<dbReference type="GO" id="GO:0016020">
    <property type="term" value="C:membrane"/>
    <property type="evidence" value="ECO:0000250"/>
    <property type="project" value="UniProtKB"/>
</dbReference>
<dbReference type="GO" id="GO:0005886">
    <property type="term" value="C:plasma membrane"/>
    <property type="evidence" value="ECO:0000250"/>
    <property type="project" value="UniProtKB"/>
</dbReference>
<dbReference type="GO" id="GO:0106235">
    <property type="term" value="F:ceramide-1-phosphate phosphatase activity"/>
    <property type="evidence" value="ECO:0000250"/>
    <property type="project" value="UniProtKB"/>
</dbReference>
<dbReference type="GO" id="GO:0008195">
    <property type="term" value="F:phosphatidate phosphatase activity"/>
    <property type="evidence" value="ECO:0000250"/>
    <property type="project" value="UniProtKB"/>
</dbReference>
<dbReference type="GO" id="GO:0042392">
    <property type="term" value="F:sphingosine-1-phosphate phosphatase activity"/>
    <property type="evidence" value="ECO:0000250"/>
    <property type="project" value="UniProtKB"/>
</dbReference>
<dbReference type="GO" id="GO:0006672">
    <property type="term" value="P:ceramide metabolic process"/>
    <property type="evidence" value="ECO:0000250"/>
    <property type="project" value="UniProtKB"/>
</dbReference>
<dbReference type="GO" id="GO:0046839">
    <property type="term" value="P:phospholipid dephosphorylation"/>
    <property type="evidence" value="ECO:0000250"/>
    <property type="project" value="UniProtKB"/>
</dbReference>
<dbReference type="GO" id="GO:0006644">
    <property type="term" value="P:phospholipid metabolic process"/>
    <property type="evidence" value="ECO:0000250"/>
    <property type="project" value="UniProtKB"/>
</dbReference>
<dbReference type="GO" id="GO:0007165">
    <property type="term" value="P:signal transduction"/>
    <property type="evidence" value="ECO:0000318"/>
    <property type="project" value="GO_Central"/>
</dbReference>
<dbReference type="GO" id="GO:0006670">
    <property type="term" value="P:sphingosine metabolic process"/>
    <property type="evidence" value="ECO:0000250"/>
    <property type="project" value="UniProtKB"/>
</dbReference>
<dbReference type="CDD" id="cd03384">
    <property type="entry name" value="PAP2_wunen"/>
    <property type="match status" value="1"/>
</dbReference>
<dbReference type="FunFam" id="1.20.144.10:FF:000016">
    <property type="entry name" value="Phospholipid phosphatase 2"/>
    <property type="match status" value="1"/>
</dbReference>
<dbReference type="Gene3D" id="1.20.144.10">
    <property type="entry name" value="Phosphatidic acid phosphatase type 2/haloperoxidase"/>
    <property type="match status" value="1"/>
</dbReference>
<dbReference type="InterPro" id="IPR036938">
    <property type="entry name" value="P_Acid_Pase_2/haloperoxi_sf"/>
</dbReference>
<dbReference type="InterPro" id="IPR000326">
    <property type="entry name" value="P_Acid_Pase_2/haloperoxidase"/>
</dbReference>
<dbReference type="InterPro" id="IPR043216">
    <property type="entry name" value="PA_PP_rel"/>
</dbReference>
<dbReference type="PANTHER" id="PTHR10165">
    <property type="entry name" value="LIPID PHOSPHATE PHOSPHATASE"/>
    <property type="match status" value="1"/>
</dbReference>
<dbReference type="PANTHER" id="PTHR10165:SF25">
    <property type="entry name" value="PHOSPHOLIPID PHOSPHATASE 2"/>
    <property type="match status" value="1"/>
</dbReference>
<dbReference type="Pfam" id="PF01569">
    <property type="entry name" value="PAP2"/>
    <property type="match status" value="1"/>
</dbReference>
<dbReference type="SMART" id="SM00014">
    <property type="entry name" value="acidPPc"/>
    <property type="match status" value="1"/>
</dbReference>
<dbReference type="SUPFAM" id="SSF48317">
    <property type="entry name" value="Acid phosphatase/Vanadium-dependent haloperoxidase"/>
    <property type="match status" value="1"/>
</dbReference>
<keyword id="KW-1003">Cell membrane</keyword>
<keyword id="KW-0256">Endoplasmic reticulum</keyword>
<keyword id="KW-0967">Endosome</keyword>
<keyword id="KW-0325">Glycoprotein</keyword>
<keyword id="KW-0378">Hydrolase</keyword>
<keyword id="KW-0443">Lipid metabolism</keyword>
<keyword id="KW-0472">Membrane</keyword>
<keyword id="KW-1185">Reference proteome</keyword>
<keyword id="KW-0812">Transmembrane</keyword>
<keyword id="KW-1133">Transmembrane helix</keyword>